<keyword id="KW-0066">ATP synthesis</keyword>
<keyword id="KW-1003">Cell membrane</keyword>
<keyword id="KW-0138">CF(0)</keyword>
<keyword id="KW-0375">Hydrogen ion transport</keyword>
<keyword id="KW-0406">Ion transport</keyword>
<keyword id="KW-0472">Membrane</keyword>
<keyword id="KW-0915">Sodium</keyword>
<keyword id="KW-0739">Sodium transport</keyword>
<keyword id="KW-0812">Transmembrane</keyword>
<keyword id="KW-1133">Transmembrane helix</keyword>
<keyword id="KW-0813">Transport</keyword>
<dbReference type="EMBL" id="DQ193538">
    <property type="protein sequence ID" value="ABB13422.1"/>
    <property type="molecule type" value="Genomic_DNA"/>
</dbReference>
<dbReference type="SMR" id="Q0ZS23"/>
<dbReference type="BRENDA" id="7.1.2.2">
    <property type="organism ID" value="8815"/>
</dbReference>
<dbReference type="GO" id="GO:0005886">
    <property type="term" value="C:plasma membrane"/>
    <property type="evidence" value="ECO:0007669"/>
    <property type="project" value="UniProtKB-SubCell"/>
</dbReference>
<dbReference type="GO" id="GO:0045259">
    <property type="term" value="C:proton-transporting ATP synthase complex"/>
    <property type="evidence" value="ECO:0007669"/>
    <property type="project" value="UniProtKB-KW"/>
</dbReference>
<dbReference type="GO" id="GO:0046933">
    <property type="term" value="F:proton-transporting ATP synthase activity, rotational mechanism"/>
    <property type="evidence" value="ECO:0007669"/>
    <property type="project" value="UniProtKB-UniRule"/>
</dbReference>
<dbReference type="GO" id="GO:0046961">
    <property type="term" value="F:proton-transporting ATPase activity, rotational mechanism"/>
    <property type="evidence" value="ECO:0007669"/>
    <property type="project" value="TreeGrafter"/>
</dbReference>
<dbReference type="GO" id="GO:0006814">
    <property type="term" value="P:sodium ion transport"/>
    <property type="evidence" value="ECO:0007669"/>
    <property type="project" value="UniProtKB-KW"/>
</dbReference>
<dbReference type="CDD" id="cd06503">
    <property type="entry name" value="ATP-synt_Fo_b"/>
    <property type="match status" value="1"/>
</dbReference>
<dbReference type="Gene3D" id="6.10.250.1580">
    <property type="match status" value="1"/>
</dbReference>
<dbReference type="HAMAP" id="MF_01398">
    <property type="entry name" value="ATP_synth_b_bprime"/>
    <property type="match status" value="1"/>
</dbReference>
<dbReference type="InterPro" id="IPR028987">
    <property type="entry name" value="ATP_synth_B-like_membr_sf"/>
</dbReference>
<dbReference type="InterPro" id="IPR002146">
    <property type="entry name" value="ATP_synth_b/b'su_bac/chlpt"/>
</dbReference>
<dbReference type="InterPro" id="IPR005864">
    <property type="entry name" value="ATP_synth_F0_bsu_bac"/>
</dbReference>
<dbReference type="InterPro" id="IPR050059">
    <property type="entry name" value="ATP_synthase_B_chain"/>
</dbReference>
<dbReference type="NCBIfam" id="TIGR01144">
    <property type="entry name" value="ATP_synt_b"/>
    <property type="match status" value="1"/>
</dbReference>
<dbReference type="NCBIfam" id="NF009992">
    <property type="entry name" value="PRK13461.1"/>
    <property type="match status" value="1"/>
</dbReference>
<dbReference type="PANTHER" id="PTHR33445:SF1">
    <property type="entry name" value="ATP SYNTHASE SUBUNIT B"/>
    <property type="match status" value="1"/>
</dbReference>
<dbReference type="PANTHER" id="PTHR33445">
    <property type="entry name" value="ATP SYNTHASE SUBUNIT B', CHLOROPLASTIC"/>
    <property type="match status" value="1"/>
</dbReference>
<dbReference type="Pfam" id="PF00430">
    <property type="entry name" value="ATP-synt_B"/>
    <property type="match status" value="1"/>
</dbReference>
<dbReference type="SUPFAM" id="SSF81573">
    <property type="entry name" value="F1F0 ATP synthase subunit B, membrane domain"/>
    <property type="match status" value="1"/>
</dbReference>
<feature type="chain" id="PRO_0000368429" description="ATP synthase subunit b, sodium ion specific">
    <location>
        <begin position="1"/>
        <end position="169"/>
    </location>
</feature>
<feature type="transmembrane region" description="Helical" evidence="2">
    <location>
        <begin position="5"/>
        <end position="27"/>
    </location>
</feature>
<evidence type="ECO:0000250" key="1"/>
<evidence type="ECO:0000255" key="2"/>
<evidence type="ECO:0000269" key="3">
    <source>
    </source>
</evidence>
<evidence type="ECO:0000305" key="4"/>
<sequence length="169" mass="19444">MQFASFISLDWGVVFQIVNTIVMYLILKKLLFKPVTKFMNDRQESIANSIKEAEETKKEAYALKAEYEAKINASKEEGQEIIKEASRKAEMRADEIIKNAQNEANRLMEKAHIEIEREKQKVVNELKDEISNIAILAASKVIEADIDKNKHEKLISDFIKEVGEATWQN</sequence>
<protein>
    <recommendedName>
        <fullName>ATP synthase subunit b, sodium ion specific</fullName>
    </recommendedName>
    <alternativeName>
        <fullName>ATP synthase F(0) sector subunit b</fullName>
    </alternativeName>
    <alternativeName>
        <fullName>ATPase subunit I</fullName>
    </alternativeName>
    <alternativeName>
        <fullName>F-type ATPase subunit b</fullName>
        <shortName>F-ATPase subunit b</shortName>
    </alternativeName>
</protein>
<name>ATPF_CLOPD</name>
<organism>
    <name type="scientific">Clostridium paradoxum</name>
    <dbReference type="NCBI Taxonomy" id="29346"/>
    <lineage>
        <taxon>Bacteria</taxon>
        <taxon>Bacillati</taxon>
        <taxon>Bacillota</taxon>
        <taxon>Clostridia</taxon>
        <taxon>Peptostreptococcales</taxon>
        <taxon>Tepidibacteraceae</taxon>
        <taxon>Alkalithermobacter</taxon>
    </lineage>
</organism>
<gene>
    <name type="primary">atpF</name>
</gene>
<proteinExistence type="evidence at protein level"/>
<reference key="1">
    <citation type="journal article" date="2006" name="J. Bacteriol.">
        <title>Biochemical and molecular characterization of a Na+-translocating F1Fo-ATPase from the thermoalkaliphilic bacterium Clostridium paradoxum.</title>
        <authorList>
            <person name="Ferguson S.A."/>
            <person name="Keis S."/>
            <person name="Cook G.M."/>
        </authorList>
    </citation>
    <scope>NUCLEOTIDE SEQUENCE [GENOMIC DNA]</scope>
    <scope>SUBSTRATE</scope>
    <scope>FUNCTION</scope>
    <scope>SUBUNIT</scope>
    <scope>INHIBITION</scope>
    <scope>SUBCELLULAR LOCATION</scope>
    <source>
        <strain>ATCC 51510 / DSM 7308 / CIP 105527 / JW-YL-7</strain>
    </source>
</reference>
<comment type="function">
    <text evidence="1">F(1)F(0) ATP synthase produces ATP from ADP in the presence of a proton or sodium gradient. F-type ATPases consist of two structural domains, F(1) containing the extramembraneous catalytic core and F(0) containing the membrane proton channel, linked together by a central stalk and a peripheral stalk. During catalysis, ATP synthesis in the catalytic domain of F(1) is coupled via a rotary mechanism of the central stalk subunits to proton translocation (By similarity).</text>
</comment>
<comment type="function">
    <text evidence="1">Component of the F(0) channel, it forms part of the peripheral stalk, linking F(1) to F(0).</text>
</comment>
<comment type="function">
    <text evidence="3">In this organism this enzyme may function as an ATP-driven Na(+) ion pump to generate a Na(+) ion electrochemical gradient rather than as an ATP synthase.</text>
</comment>
<comment type="subunit">
    <text evidence="1">F-type ATPases have 2 components, F(1) - the catalytic core - and F(0) - the membrane proton channel. F(1) has five subunits: alpha(3), beta(3), gamma(1), delta(1), epsilon(1). F(0) has three main subunits: a(1), b(2) and c(10-14). The alpha and beta chains form an alternating ring which encloses part of the gamma chain. F(1) is attached to F(0) by a central stalk formed by the gamma and epsilon chains, while a peripheral stalk is formed by the delta and b chains (By similarity).</text>
</comment>
<comment type="subcellular location">
    <subcellularLocation>
        <location evidence="3">Cell membrane</location>
        <topology evidence="3">Single-pass membrane protein</topology>
    </subcellularLocation>
</comment>
<comment type="miscellaneous">
    <text>The ATPase of C.paradoxum is of special interest because it uses sodium ions instead of protons as the physiological coupling ion.</text>
</comment>
<comment type="similarity">
    <text evidence="4">Belongs to the ATPase B chain family.</text>
</comment>
<accession>Q0ZS23</accession>